<accession>Q9SVE6</accession>
<evidence type="ECO:0000250" key="1">
    <source>
        <dbReference type="UniProtKB" id="Q9H488"/>
    </source>
</evidence>
<evidence type="ECO:0000255" key="2"/>
<evidence type="ECO:0000255" key="3">
    <source>
        <dbReference type="PROSITE-ProRule" id="PRU00498"/>
    </source>
</evidence>
<evidence type="ECO:0000256" key="4">
    <source>
        <dbReference type="SAM" id="MobiDB-lite"/>
    </source>
</evidence>
<evidence type="ECO:0000269" key="5">
    <source>
    </source>
</evidence>
<evidence type="ECO:0000303" key="6">
    <source>
    </source>
</evidence>
<evidence type="ECO:0000305" key="7"/>
<evidence type="ECO:0000312" key="8">
    <source>
        <dbReference type="Araport" id="AT4G38390"/>
    </source>
</evidence>
<evidence type="ECO:0000312" key="9">
    <source>
        <dbReference type="EMBL" id="ARJ31444.1"/>
    </source>
</evidence>
<evidence type="ECO:0000312" key="10">
    <source>
        <dbReference type="EMBL" id="CAB37495.1"/>
    </source>
</evidence>
<name>RHS17_ARATH</name>
<keyword id="KW-0119">Carbohydrate metabolism</keyword>
<keyword id="KW-0294">Fucose metabolism</keyword>
<keyword id="KW-0325">Glycoprotein</keyword>
<keyword id="KW-0328">Glycosyltransferase</keyword>
<keyword id="KW-0472">Membrane</keyword>
<keyword id="KW-1185">Reference proteome</keyword>
<keyword id="KW-0735">Signal-anchor</keyword>
<keyword id="KW-0808">Transferase</keyword>
<keyword id="KW-0812">Transmembrane</keyword>
<keyword id="KW-1133">Transmembrane helix</keyword>
<organism>
    <name type="scientific">Arabidopsis thaliana</name>
    <name type="common">Mouse-ear cress</name>
    <dbReference type="NCBI Taxonomy" id="3702"/>
    <lineage>
        <taxon>Eukaryota</taxon>
        <taxon>Viridiplantae</taxon>
        <taxon>Streptophyta</taxon>
        <taxon>Embryophyta</taxon>
        <taxon>Tracheophyta</taxon>
        <taxon>Spermatophyta</taxon>
        <taxon>Magnoliopsida</taxon>
        <taxon>eudicotyledons</taxon>
        <taxon>Gunneridae</taxon>
        <taxon>Pentapetalae</taxon>
        <taxon>rosids</taxon>
        <taxon>malvids</taxon>
        <taxon>Brassicales</taxon>
        <taxon>Brassicaceae</taxon>
        <taxon>Camelineae</taxon>
        <taxon>Arabidopsis</taxon>
    </lineage>
</organism>
<comment type="pathway">
    <text evidence="7">Glycan metabolism.</text>
</comment>
<comment type="subcellular location">
    <subcellularLocation>
        <location evidence="2">Membrane</location>
        <topology evidence="7">Single-pass type II membrane protein</topology>
    </subcellularLocation>
</comment>
<comment type="tissue specificity">
    <text evidence="5">Specifically expressed in the root hair.</text>
</comment>
<comment type="similarity">
    <text evidence="7">Belongs to the glycosyltransferase GT106 family.</text>
</comment>
<gene>
    <name evidence="6 9" type="primary">RHS17</name>
    <name evidence="7" type="synonym">OFUT32</name>
    <name evidence="8" type="ordered locus">At4g38390</name>
    <name evidence="10" type="ORF">F22I13.160</name>
</gene>
<reference key="1">
    <citation type="submission" date="2017-04" db="EMBL/GenBank/DDBJ databases">
        <title>Arabidopsis glycosyltransferases: an update.</title>
        <authorList>
            <person name="Zeng W."/>
            <person name="Gluza P."/>
            <person name="Heazlewood J."/>
        </authorList>
    </citation>
    <scope>NUCLEOTIDE SEQUENCE [MRNA]</scope>
    <source>
        <strain>cv. Columbia</strain>
    </source>
</reference>
<reference key="2">
    <citation type="journal article" date="1999" name="Nature">
        <title>Sequence and analysis of chromosome 4 of the plant Arabidopsis thaliana.</title>
        <authorList>
            <person name="Mayer K.F.X."/>
            <person name="Schueller C."/>
            <person name="Wambutt R."/>
            <person name="Murphy G."/>
            <person name="Volckaert G."/>
            <person name="Pohl T."/>
            <person name="Duesterhoeft A."/>
            <person name="Stiekema W."/>
            <person name="Entian K.-D."/>
            <person name="Terryn N."/>
            <person name="Harris B."/>
            <person name="Ansorge W."/>
            <person name="Brandt P."/>
            <person name="Grivell L.A."/>
            <person name="Rieger M."/>
            <person name="Weichselgartner M."/>
            <person name="de Simone V."/>
            <person name="Obermaier B."/>
            <person name="Mache R."/>
            <person name="Mueller M."/>
            <person name="Kreis M."/>
            <person name="Delseny M."/>
            <person name="Puigdomenech P."/>
            <person name="Watson M."/>
            <person name="Schmidtheini T."/>
            <person name="Reichert B."/>
            <person name="Portetelle D."/>
            <person name="Perez-Alonso M."/>
            <person name="Boutry M."/>
            <person name="Bancroft I."/>
            <person name="Vos P."/>
            <person name="Hoheisel J."/>
            <person name="Zimmermann W."/>
            <person name="Wedler H."/>
            <person name="Ridley P."/>
            <person name="Langham S.-A."/>
            <person name="McCullagh B."/>
            <person name="Bilham L."/>
            <person name="Robben J."/>
            <person name="van der Schueren J."/>
            <person name="Grymonprez B."/>
            <person name="Chuang Y.-J."/>
            <person name="Vandenbussche F."/>
            <person name="Braeken M."/>
            <person name="Weltjens I."/>
            <person name="Voet M."/>
            <person name="Bastiaens I."/>
            <person name="Aert R."/>
            <person name="Defoor E."/>
            <person name="Weitzenegger T."/>
            <person name="Bothe G."/>
            <person name="Ramsperger U."/>
            <person name="Hilbert H."/>
            <person name="Braun M."/>
            <person name="Holzer E."/>
            <person name="Brandt A."/>
            <person name="Peters S."/>
            <person name="van Staveren M."/>
            <person name="Dirkse W."/>
            <person name="Mooijman P."/>
            <person name="Klein Lankhorst R."/>
            <person name="Rose M."/>
            <person name="Hauf J."/>
            <person name="Koetter P."/>
            <person name="Berneiser S."/>
            <person name="Hempel S."/>
            <person name="Feldpausch M."/>
            <person name="Lamberth S."/>
            <person name="Van den Daele H."/>
            <person name="De Keyser A."/>
            <person name="Buysshaert C."/>
            <person name="Gielen J."/>
            <person name="Villarroel R."/>
            <person name="De Clercq R."/>
            <person name="van Montagu M."/>
            <person name="Rogers J."/>
            <person name="Cronin A."/>
            <person name="Quail M.A."/>
            <person name="Bray-Allen S."/>
            <person name="Clark L."/>
            <person name="Doggett J."/>
            <person name="Hall S."/>
            <person name="Kay M."/>
            <person name="Lennard N."/>
            <person name="McLay K."/>
            <person name="Mayes R."/>
            <person name="Pettett A."/>
            <person name="Rajandream M.A."/>
            <person name="Lyne M."/>
            <person name="Benes V."/>
            <person name="Rechmann S."/>
            <person name="Borkova D."/>
            <person name="Bloecker H."/>
            <person name="Scharfe M."/>
            <person name="Grimm M."/>
            <person name="Loehnert T.-H."/>
            <person name="Dose S."/>
            <person name="de Haan M."/>
            <person name="Maarse A.C."/>
            <person name="Schaefer M."/>
            <person name="Mueller-Auer S."/>
            <person name="Gabel C."/>
            <person name="Fuchs M."/>
            <person name="Fartmann B."/>
            <person name="Granderath K."/>
            <person name="Dauner D."/>
            <person name="Herzl A."/>
            <person name="Neumann S."/>
            <person name="Argiriou A."/>
            <person name="Vitale D."/>
            <person name="Liguori R."/>
            <person name="Piravandi E."/>
            <person name="Massenet O."/>
            <person name="Quigley F."/>
            <person name="Clabauld G."/>
            <person name="Muendlein A."/>
            <person name="Felber R."/>
            <person name="Schnabl S."/>
            <person name="Hiller R."/>
            <person name="Schmidt W."/>
            <person name="Lecharny A."/>
            <person name="Aubourg S."/>
            <person name="Chefdor F."/>
            <person name="Cooke R."/>
            <person name="Berger C."/>
            <person name="Monfort A."/>
            <person name="Casacuberta E."/>
            <person name="Gibbons T."/>
            <person name="Weber N."/>
            <person name="Vandenbol M."/>
            <person name="Bargues M."/>
            <person name="Terol J."/>
            <person name="Torres A."/>
            <person name="Perez-Perez A."/>
            <person name="Purnelle B."/>
            <person name="Bent E."/>
            <person name="Johnson S."/>
            <person name="Tacon D."/>
            <person name="Jesse T."/>
            <person name="Heijnen L."/>
            <person name="Schwarz S."/>
            <person name="Scholler P."/>
            <person name="Heber S."/>
            <person name="Francs P."/>
            <person name="Bielke C."/>
            <person name="Frishman D."/>
            <person name="Haase D."/>
            <person name="Lemcke K."/>
            <person name="Mewes H.-W."/>
            <person name="Stocker S."/>
            <person name="Zaccaria P."/>
            <person name="Bevan M."/>
            <person name="Wilson R.K."/>
            <person name="de la Bastide M."/>
            <person name="Habermann K."/>
            <person name="Parnell L."/>
            <person name="Dedhia N."/>
            <person name="Gnoj L."/>
            <person name="Schutz K."/>
            <person name="Huang E."/>
            <person name="Spiegel L."/>
            <person name="Sekhon M."/>
            <person name="Murray J."/>
            <person name="Sheet P."/>
            <person name="Cordes M."/>
            <person name="Abu-Threideh J."/>
            <person name="Stoneking T."/>
            <person name="Kalicki J."/>
            <person name="Graves T."/>
            <person name="Harmon G."/>
            <person name="Edwards J."/>
            <person name="Latreille P."/>
            <person name="Courtney L."/>
            <person name="Cloud J."/>
            <person name="Abbott A."/>
            <person name="Scott K."/>
            <person name="Johnson D."/>
            <person name="Minx P."/>
            <person name="Bentley D."/>
            <person name="Fulton B."/>
            <person name="Miller N."/>
            <person name="Greco T."/>
            <person name="Kemp K."/>
            <person name="Kramer J."/>
            <person name="Fulton L."/>
            <person name="Mardis E."/>
            <person name="Dante M."/>
            <person name="Pepin K."/>
            <person name="Hillier L.W."/>
            <person name="Nelson J."/>
            <person name="Spieth J."/>
            <person name="Ryan E."/>
            <person name="Andrews S."/>
            <person name="Geisel C."/>
            <person name="Layman D."/>
            <person name="Du H."/>
            <person name="Ali J."/>
            <person name="Berghoff A."/>
            <person name="Jones K."/>
            <person name="Drone K."/>
            <person name="Cotton M."/>
            <person name="Joshu C."/>
            <person name="Antonoiu B."/>
            <person name="Zidanic M."/>
            <person name="Strong C."/>
            <person name="Sun H."/>
            <person name="Lamar B."/>
            <person name="Yordan C."/>
            <person name="Ma P."/>
            <person name="Zhong J."/>
            <person name="Preston R."/>
            <person name="Vil D."/>
            <person name="Shekher M."/>
            <person name="Matero A."/>
            <person name="Shah R."/>
            <person name="Swaby I.K."/>
            <person name="O'Shaughnessy A."/>
            <person name="Rodriguez M."/>
            <person name="Hoffman J."/>
            <person name="Till S."/>
            <person name="Granat S."/>
            <person name="Shohdy N."/>
            <person name="Hasegawa A."/>
            <person name="Hameed A."/>
            <person name="Lodhi M."/>
            <person name="Johnson A."/>
            <person name="Chen E."/>
            <person name="Marra M.A."/>
            <person name="Martienssen R."/>
            <person name="McCombie W.R."/>
        </authorList>
    </citation>
    <scope>NUCLEOTIDE SEQUENCE [LARGE SCALE GENOMIC DNA]</scope>
    <source>
        <strain>cv. Columbia</strain>
    </source>
</reference>
<reference key="3">
    <citation type="journal article" date="2017" name="Plant J.">
        <title>Araport11: a complete reannotation of the Arabidopsis thaliana reference genome.</title>
        <authorList>
            <person name="Cheng C.Y."/>
            <person name="Krishnakumar V."/>
            <person name="Chan A.P."/>
            <person name="Thibaud-Nissen F."/>
            <person name="Schobel S."/>
            <person name="Town C.D."/>
        </authorList>
    </citation>
    <scope>GENOME REANNOTATION</scope>
    <source>
        <strain>cv. Columbia</strain>
    </source>
</reference>
<reference key="4">
    <citation type="journal article" date="2009" name="Plant Physiol.">
        <title>Cis-element- and transcriptome-based screening of root hair-specific genes and their functional characterization in Arabidopsis.</title>
        <authorList>
            <person name="Won S.-K."/>
            <person name="Lee Y.-J."/>
            <person name="Lee H.-Y."/>
            <person name="Heo Y.-K."/>
            <person name="Cho M."/>
            <person name="Cho H.-T."/>
        </authorList>
    </citation>
    <scope>TISSUE SPECIFICITY</scope>
</reference>
<reference key="5">
    <citation type="journal article" date="2012" name="Front. Plant Sci.">
        <title>Plant glycosyltransferases beyond CAZy: a perspective on DUF families.</title>
        <authorList>
            <person name="Hansen S.F."/>
            <person name="Harholt J."/>
            <person name="Oikawa A."/>
            <person name="Scheller H.V."/>
        </authorList>
    </citation>
    <scope>GENE FAMILY</scope>
    <scope>REVIEW</scope>
</reference>
<reference key="6">
    <citation type="journal article" date="2012" name="PLoS ONE">
        <title>The FRIABLE1 gene product affects cell adhesion in Arabidopsis.</title>
        <authorList>
            <person name="Neumetzler L."/>
            <person name="Humphrey T."/>
            <person name="Lumba S."/>
            <person name="Snyder S."/>
            <person name="Yeats T.H."/>
            <person name="Usadel B."/>
            <person name="Vasilevski A."/>
            <person name="Patel J."/>
            <person name="Rose J.K."/>
            <person name="Persson S."/>
            <person name="Bonetta D."/>
        </authorList>
    </citation>
    <scope>GENE FAMILY</scope>
</reference>
<reference key="7">
    <citation type="journal article" date="2012" name="PLoS ONE">
        <title>Identification of putative rhamnogalacturonan-II specific glycosyltransferases in Arabidopsis using a combination of bioinformatics approaches.</title>
        <authorList>
            <person name="Voxeur A."/>
            <person name="Andre A."/>
            <person name="Breton C."/>
            <person name="Lerouge P."/>
        </authorList>
    </citation>
    <scope>GENE FAMILY</scope>
</reference>
<reference key="8">
    <citation type="journal article" date="2013" name="Plant J.">
        <title>Identification of an additional protein involved in mannan biosynthesis.</title>
        <authorList>
            <person name="Wang Y."/>
            <person name="Mortimer J.C."/>
            <person name="Davis J."/>
            <person name="Dupree P."/>
            <person name="Keegstra K."/>
        </authorList>
    </citation>
    <scope>GENE FAMILY</scope>
</reference>
<reference key="9">
    <citation type="journal article" date="2014" name="Plant J.">
        <title>The plant glycosyltransferase clone collection for functional genomics.</title>
        <authorList>
            <person name="Lao J."/>
            <person name="Oikawa A."/>
            <person name="Bromley J.R."/>
            <person name="McInerney P."/>
            <person name="Suttangkakul A."/>
            <person name="Smith-Moritz A.M."/>
            <person name="Plahar H."/>
            <person name="Chiu T.-Y."/>
            <person name="Gonzalez Fernandez-Nino S.M.G."/>
            <person name="Ebert B."/>
            <person name="Yang F."/>
            <person name="Christiansen K.M."/>
            <person name="Hansen S.F."/>
            <person name="Stonebloom S."/>
            <person name="Adams P.D."/>
            <person name="Ronald P.C."/>
            <person name="Hillson N.J."/>
            <person name="Hadi M.Z."/>
            <person name="Vega-Sanchez M.E."/>
            <person name="Loque D."/>
            <person name="Scheller H.V."/>
            <person name="Heazlewood J.L."/>
        </authorList>
    </citation>
    <scope>WEB RESOURCE</scope>
</reference>
<protein>
    <recommendedName>
        <fullName evidence="6 9">Protein ROOT HAIR SPECIFIC 17</fullName>
        <ecNumber evidence="7">2.4.1.-</ecNumber>
    </recommendedName>
    <alternativeName>
        <fullName evidence="7">O-fucosyltransferase 32</fullName>
        <shortName evidence="7">O-FucT-32</shortName>
    </alternativeName>
    <alternativeName>
        <fullName evidence="7">O-fucosyltransferase family protein</fullName>
    </alternativeName>
</protein>
<feature type="chain" id="PRO_0000442094" description="Protein ROOT HAIR SPECIFIC 17">
    <location>
        <begin position="1"/>
        <end position="551"/>
    </location>
</feature>
<feature type="transmembrane region" description="Helical; Signal-anchor for type II membrane protein" evidence="7">
    <location>
        <begin position="39"/>
        <end position="59"/>
    </location>
</feature>
<feature type="region of interest" description="Disordered" evidence="4">
    <location>
        <begin position="515"/>
        <end position="539"/>
    </location>
</feature>
<feature type="binding site" evidence="1">
    <location>
        <begin position="293"/>
        <end position="295"/>
    </location>
    <ligand>
        <name>substrate</name>
    </ligand>
</feature>
<feature type="glycosylation site" description="N-linked (GlcNAc...) asparagine" evidence="3">
    <location>
        <position position="109"/>
    </location>
</feature>
<feature type="glycosylation site" description="N-linked (GlcNAc...) asparagine" evidence="3">
    <location>
        <position position="153"/>
    </location>
</feature>
<feature type="glycosylation site" description="N-linked (GlcNAc...) asparagine" evidence="3">
    <location>
        <position position="405"/>
    </location>
</feature>
<feature type="glycosylation site" description="N-linked (GlcNAc...) asparagine" evidence="3">
    <location>
        <position position="465"/>
    </location>
</feature>
<sequence length="551" mass="62872">MASLKLKKRDNGAEPDKKKLVIAGIRHQLLLLLRRRHRLFPLVSAVSGCLLLILFSFSTLSPPPLIHHNNQVAVEPNPTTPFRVPENGGRSDRQLWSSRLSNLYYACSNATDTFQVTDTRSQTNRYLLIATSGGLNQQRTGIIDAVVAAYILNATLVVPKLDQKSYWKDTSNFEDIFDVDWFISHLSKDVKIIKELPKEEQSRISTSLQSMRVPRKCTPSCYLQRVLPILTKKHVVQLSKFDYRLSNALDTELQKLRCRVNYHAVRYTESINRMGQLLVDRMRKKAKHFVALHLRFEPDMLAFSGCYYGGGQKERLELGAMRRRWKTLHAANPEKVRRHGRCPLTPEEIGLMLRGLGFGKEVHLYVASGEVYGGEDTLAPLRALFPNLHTKETLTSKKELAPFANFSSRMAALDFIVCDKSDAFVTNNNGNMARILAGRRRYLGHKVTIRPNAKKLYEIFKNRHNMTWGEFSSKVRRYQTGFMGEPDEMKPGEGEFHENPASCICRTSEARVKEKAKHVNEDDSSEYSEIGNVPISSRSDLDHSQFDEVIF</sequence>
<dbReference type="EC" id="2.4.1.-" evidence="7"/>
<dbReference type="EMBL" id="KY906080">
    <property type="protein sequence ID" value="ARJ31444.1"/>
    <property type="molecule type" value="mRNA"/>
</dbReference>
<dbReference type="EMBL" id="AL035539">
    <property type="protein sequence ID" value="CAB37495.1"/>
    <property type="molecule type" value="Genomic_DNA"/>
</dbReference>
<dbReference type="EMBL" id="AL161593">
    <property type="protein sequence ID" value="CAB80504.1"/>
    <property type="molecule type" value="Genomic_DNA"/>
</dbReference>
<dbReference type="EMBL" id="CP002687">
    <property type="protein sequence ID" value="AEE86922.1"/>
    <property type="molecule type" value="Genomic_DNA"/>
</dbReference>
<dbReference type="PIR" id="T05667">
    <property type="entry name" value="T05667"/>
</dbReference>
<dbReference type="RefSeq" id="NP_195552.1">
    <property type="nucleotide sequence ID" value="NM_120001.2"/>
</dbReference>
<dbReference type="STRING" id="3702.Q9SVE6"/>
<dbReference type="GlyCosmos" id="Q9SVE6">
    <property type="glycosylation" value="4 sites, No reported glycans"/>
</dbReference>
<dbReference type="GlyGen" id="Q9SVE6">
    <property type="glycosylation" value="4 sites"/>
</dbReference>
<dbReference type="PaxDb" id="3702-AT4G38390.1"/>
<dbReference type="EnsemblPlants" id="AT4G38390.1">
    <property type="protein sequence ID" value="AT4G38390.1"/>
    <property type="gene ID" value="AT4G38390"/>
</dbReference>
<dbReference type="GeneID" id="829996"/>
<dbReference type="Gramene" id="AT4G38390.1">
    <property type="protein sequence ID" value="AT4G38390.1"/>
    <property type="gene ID" value="AT4G38390"/>
</dbReference>
<dbReference type="KEGG" id="ath:AT4G38390"/>
<dbReference type="Araport" id="AT4G38390"/>
<dbReference type="TAIR" id="AT4G38390">
    <property type="gene designation" value="RHS17"/>
</dbReference>
<dbReference type="eggNOG" id="ENOG502QRBP">
    <property type="taxonomic scope" value="Eukaryota"/>
</dbReference>
<dbReference type="HOGENOM" id="CLU_018420_6_0_1"/>
<dbReference type="InParanoid" id="Q9SVE6"/>
<dbReference type="OMA" id="PHSMRVP"/>
<dbReference type="OrthoDB" id="1882547at2759"/>
<dbReference type="PhylomeDB" id="Q9SVE6"/>
<dbReference type="PRO" id="PR:Q9SVE6"/>
<dbReference type="Proteomes" id="UP000006548">
    <property type="component" value="Chromosome 4"/>
</dbReference>
<dbReference type="ExpressionAtlas" id="Q9SVE6">
    <property type="expression patterns" value="baseline and differential"/>
</dbReference>
<dbReference type="GO" id="GO:0016020">
    <property type="term" value="C:membrane"/>
    <property type="evidence" value="ECO:0007669"/>
    <property type="project" value="UniProtKB-SubCell"/>
</dbReference>
<dbReference type="GO" id="GO:0016757">
    <property type="term" value="F:glycosyltransferase activity"/>
    <property type="evidence" value="ECO:0007669"/>
    <property type="project" value="UniProtKB-KW"/>
</dbReference>
<dbReference type="GO" id="GO:0006004">
    <property type="term" value="P:fucose metabolic process"/>
    <property type="evidence" value="ECO:0007669"/>
    <property type="project" value="UniProtKB-KW"/>
</dbReference>
<dbReference type="CDD" id="cd11299">
    <property type="entry name" value="O-FucT_plant"/>
    <property type="match status" value="1"/>
</dbReference>
<dbReference type="InterPro" id="IPR024709">
    <property type="entry name" value="FucosylTrfase_pln"/>
</dbReference>
<dbReference type="InterPro" id="IPR019378">
    <property type="entry name" value="GDP-Fuc_O-FucTrfase"/>
</dbReference>
<dbReference type="PANTHER" id="PTHR31818">
    <property type="entry name" value="O-FUCOSYLTRANSFERASE 16"/>
    <property type="match status" value="1"/>
</dbReference>
<dbReference type="PANTHER" id="PTHR31818:SF16">
    <property type="entry name" value="PROTEIN ROOT HAIR SPECIFIC 17"/>
    <property type="match status" value="1"/>
</dbReference>
<dbReference type="Pfam" id="PF10250">
    <property type="entry name" value="O-FucT"/>
    <property type="match status" value="1"/>
</dbReference>
<dbReference type="PIRSF" id="PIRSF009360">
    <property type="entry name" value="UCP009360"/>
    <property type="match status" value="1"/>
</dbReference>
<proteinExistence type="evidence at transcript level"/>